<keyword id="KW-0249">Electron transport</keyword>
<keyword id="KW-0349">Heme</keyword>
<keyword id="KW-0408">Iron</keyword>
<keyword id="KW-0472">Membrane</keyword>
<keyword id="KW-0479">Metal-binding</keyword>
<keyword id="KW-0496">Mitochondrion</keyword>
<keyword id="KW-0999">Mitochondrion inner membrane</keyword>
<keyword id="KW-0679">Respiratory chain</keyword>
<keyword id="KW-0812">Transmembrane</keyword>
<keyword id="KW-1133">Transmembrane helix</keyword>
<keyword id="KW-0813">Transport</keyword>
<keyword id="KW-0830">Ubiquinone</keyword>
<gene>
    <name type="primary">MT-CYB</name>
    <name type="synonym">COB</name>
    <name type="synonym">CYTB</name>
    <name type="synonym">MTCYB</name>
</gene>
<accession>Q9MMZ2</accession>
<evidence type="ECO:0000250" key="1"/>
<evidence type="ECO:0000250" key="2">
    <source>
        <dbReference type="UniProtKB" id="P00157"/>
    </source>
</evidence>
<evidence type="ECO:0000255" key="3">
    <source>
        <dbReference type="PROSITE-ProRule" id="PRU00967"/>
    </source>
</evidence>
<evidence type="ECO:0000255" key="4">
    <source>
        <dbReference type="PROSITE-ProRule" id="PRU00968"/>
    </source>
</evidence>
<feature type="chain" id="PRO_0000061322" description="Cytochrome b">
    <location>
        <begin position="1"/>
        <end position="379"/>
    </location>
</feature>
<feature type="transmembrane region" description="Helical" evidence="2">
    <location>
        <begin position="33"/>
        <end position="53"/>
    </location>
</feature>
<feature type="transmembrane region" description="Helical" evidence="2">
    <location>
        <begin position="77"/>
        <end position="98"/>
    </location>
</feature>
<feature type="transmembrane region" description="Helical" evidence="2">
    <location>
        <begin position="113"/>
        <end position="133"/>
    </location>
</feature>
<feature type="transmembrane region" description="Helical" evidence="2">
    <location>
        <begin position="178"/>
        <end position="198"/>
    </location>
</feature>
<feature type="transmembrane region" description="Helical" evidence="2">
    <location>
        <begin position="226"/>
        <end position="246"/>
    </location>
</feature>
<feature type="transmembrane region" description="Helical" evidence="2">
    <location>
        <begin position="288"/>
        <end position="308"/>
    </location>
</feature>
<feature type="transmembrane region" description="Helical" evidence="2">
    <location>
        <begin position="320"/>
        <end position="340"/>
    </location>
</feature>
<feature type="transmembrane region" description="Helical" evidence="2">
    <location>
        <begin position="347"/>
        <end position="367"/>
    </location>
</feature>
<feature type="binding site" description="axial binding residue" evidence="2">
    <location>
        <position position="83"/>
    </location>
    <ligand>
        <name>heme b</name>
        <dbReference type="ChEBI" id="CHEBI:60344"/>
        <label>b562</label>
    </ligand>
    <ligandPart>
        <name>Fe</name>
        <dbReference type="ChEBI" id="CHEBI:18248"/>
    </ligandPart>
</feature>
<feature type="binding site" description="axial binding residue" evidence="2">
    <location>
        <position position="97"/>
    </location>
    <ligand>
        <name>heme b</name>
        <dbReference type="ChEBI" id="CHEBI:60344"/>
        <label>b566</label>
    </ligand>
    <ligandPart>
        <name>Fe</name>
        <dbReference type="ChEBI" id="CHEBI:18248"/>
    </ligandPart>
</feature>
<feature type="binding site" description="axial binding residue" evidence="2">
    <location>
        <position position="182"/>
    </location>
    <ligand>
        <name>heme b</name>
        <dbReference type="ChEBI" id="CHEBI:60344"/>
        <label>b562</label>
    </ligand>
    <ligandPart>
        <name>Fe</name>
        <dbReference type="ChEBI" id="CHEBI:18248"/>
    </ligandPart>
</feature>
<feature type="binding site" description="axial binding residue" evidence="2">
    <location>
        <position position="196"/>
    </location>
    <ligand>
        <name>heme b</name>
        <dbReference type="ChEBI" id="CHEBI:60344"/>
        <label>b566</label>
    </ligand>
    <ligandPart>
        <name>Fe</name>
        <dbReference type="ChEBI" id="CHEBI:18248"/>
    </ligandPart>
</feature>
<feature type="binding site" evidence="2">
    <location>
        <position position="201"/>
    </location>
    <ligand>
        <name>a ubiquinone</name>
        <dbReference type="ChEBI" id="CHEBI:16389"/>
    </ligand>
</feature>
<sequence length="379" mass="42824">MTNIRKTHPLMKIVNNAFIDLPTPSNISSWWNFGSLLGICLILQILTGLFLAMHYTSDTTTAFSSVTHICRDVNYGWIIRYMHANGASMFFICLFMHVGRGLYYGSYTFLETWNIGVILLLTTMXTAFMGYVLPWGQMSFWGATVXTNLLSAIPYIGTDLVEWIWGGFSVDKATLTRFFAFHFILPFIIAALAMVHLLFLHETGSNNPTGILSDADKIPFHPYYTIKDILGAMLLILTLMLLVLFSPDLLGDPDNYTPANPLNTPPHIKPEWYFLFAYAILRSIPNKLGGVLALALSILVLMFVPFLHMSKQRSMMFRPISQCVFWTLVADLLALTWIGGQPVEHPYMVIGQLASIMYFLIILVMMPVASTIENNLLKW</sequence>
<protein>
    <recommendedName>
        <fullName>Cytochrome b</fullName>
    </recommendedName>
    <alternativeName>
        <fullName>Complex III subunit 3</fullName>
    </alternativeName>
    <alternativeName>
        <fullName>Complex III subunit III</fullName>
    </alternativeName>
    <alternativeName>
        <fullName>Cytochrome b-c1 complex subunit 3</fullName>
    </alternativeName>
    <alternativeName>
        <fullName>Ubiquinol-cytochrome-c reductase complex cytochrome b subunit</fullName>
    </alternativeName>
</protein>
<proteinExistence type="inferred from homology"/>
<organism>
    <name type="scientific">Oreamnos americanus</name>
    <name type="common">Mountain goat</name>
    <name type="synonym">Rupicapra americana</name>
    <dbReference type="NCBI Taxonomy" id="34873"/>
    <lineage>
        <taxon>Eukaryota</taxon>
        <taxon>Metazoa</taxon>
        <taxon>Chordata</taxon>
        <taxon>Craniata</taxon>
        <taxon>Vertebrata</taxon>
        <taxon>Euteleostomi</taxon>
        <taxon>Mammalia</taxon>
        <taxon>Eutheria</taxon>
        <taxon>Laurasiatheria</taxon>
        <taxon>Artiodactyla</taxon>
        <taxon>Ruminantia</taxon>
        <taxon>Pecora</taxon>
        <taxon>Bovidae</taxon>
        <taxon>Caprinae</taxon>
        <taxon>Oreamnos</taxon>
    </lineage>
</organism>
<comment type="function">
    <text evidence="2">Component of the ubiquinol-cytochrome c reductase complex (complex III or cytochrome b-c1 complex) that is part of the mitochondrial respiratory chain. The b-c1 complex mediates electron transfer from ubiquinol to cytochrome c. Contributes to the generation of a proton gradient across the mitochondrial membrane that is then used for ATP synthesis.</text>
</comment>
<comment type="cofactor">
    <cofactor evidence="2">
        <name>heme b</name>
        <dbReference type="ChEBI" id="CHEBI:60344"/>
    </cofactor>
    <text evidence="2">Binds 2 heme b groups non-covalently.</text>
</comment>
<comment type="subunit">
    <text evidence="2">The cytochrome bc1 complex contains 11 subunits: 3 respiratory subunits (MT-CYB, CYC1 and UQCRFS1), 2 core proteins (UQCRC1 and UQCRC2) and 6 low-molecular weight proteins (UQCRH/QCR6, UQCRB/QCR7, UQCRQ/QCR8, UQCR10/QCR9, UQCR11/QCR10 and a cleavage product of UQCRFS1). This cytochrome bc1 complex then forms a dimer.</text>
</comment>
<comment type="subcellular location">
    <subcellularLocation>
        <location evidence="2">Mitochondrion inner membrane</location>
        <topology evidence="2">Multi-pass membrane protein</topology>
    </subcellularLocation>
</comment>
<comment type="miscellaneous">
    <text evidence="1">Heme 1 (or BL or b562) is low-potential and absorbs at about 562 nm, and heme 2 (or BH or b566) is high-potential and absorbs at about 566 nm.</text>
</comment>
<comment type="similarity">
    <text evidence="3 4">Belongs to the cytochrome b family.</text>
</comment>
<comment type="caution">
    <text evidence="2">The full-length protein contains only eight transmembrane helices, not nine as predicted by bioinformatics tools.</text>
</comment>
<dbReference type="EMBL" id="AF190632">
    <property type="protein sequence ID" value="AAF61857.1"/>
    <property type="molecule type" value="Genomic_DNA"/>
</dbReference>
<dbReference type="GO" id="GO:0005743">
    <property type="term" value="C:mitochondrial inner membrane"/>
    <property type="evidence" value="ECO:0007669"/>
    <property type="project" value="UniProtKB-SubCell"/>
</dbReference>
<dbReference type="GO" id="GO:0045275">
    <property type="term" value="C:respiratory chain complex III"/>
    <property type="evidence" value="ECO:0007669"/>
    <property type="project" value="InterPro"/>
</dbReference>
<dbReference type="GO" id="GO:0046872">
    <property type="term" value="F:metal ion binding"/>
    <property type="evidence" value="ECO:0007669"/>
    <property type="project" value="UniProtKB-KW"/>
</dbReference>
<dbReference type="GO" id="GO:0008121">
    <property type="term" value="F:ubiquinol-cytochrome-c reductase activity"/>
    <property type="evidence" value="ECO:0007669"/>
    <property type="project" value="InterPro"/>
</dbReference>
<dbReference type="GO" id="GO:0006122">
    <property type="term" value="P:mitochondrial electron transport, ubiquinol to cytochrome c"/>
    <property type="evidence" value="ECO:0007669"/>
    <property type="project" value="TreeGrafter"/>
</dbReference>
<dbReference type="CDD" id="cd00290">
    <property type="entry name" value="cytochrome_b_C"/>
    <property type="match status" value="1"/>
</dbReference>
<dbReference type="CDD" id="cd00284">
    <property type="entry name" value="Cytochrome_b_N"/>
    <property type="match status" value="1"/>
</dbReference>
<dbReference type="FunFam" id="1.20.810.10:FF:000002">
    <property type="entry name" value="Cytochrome b"/>
    <property type="match status" value="1"/>
</dbReference>
<dbReference type="Gene3D" id="1.20.810.10">
    <property type="entry name" value="Cytochrome Bc1 Complex, Chain C"/>
    <property type="match status" value="1"/>
</dbReference>
<dbReference type="InterPro" id="IPR005798">
    <property type="entry name" value="Cyt_b/b6_C"/>
</dbReference>
<dbReference type="InterPro" id="IPR036150">
    <property type="entry name" value="Cyt_b/b6_C_sf"/>
</dbReference>
<dbReference type="InterPro" id="IPR005797">
    <property type="entry name" value="Cyt_b/b6_N"/>
</dbReference>
<dbReference type="InterPro" id="IPR027387">
    <property type="entry name" value="Cytb/b6-like_sf"/>
</dbReference>
<dbReference type="InterPro" id="IPR030689">
    <property type="entry name" value="Cytochrome_b"/>
</dbReference>
<dbReference type="InterPro" id="IPR048260">
    <property type="entry name" value="Cytochrome_b_C_euk/bac"/>
</dbReference>
<dbReference type="InterPro" id="IPR048259">
    <property type="entry name" value="Cytochrome_b_N_euk/bac"/>
</dbReference>
<dbReference type="InterPro" id="IPR016174">
    <property type="entry name" value="Di-haem_cyt_TM"/>
</dbReference>
<dbReference type="PANTHER" id="PTHR19271">
    <property type="entry name" value="CYTOCHROME B"/>
    <property type="match status" value="1"/>
</dbReference>
<dbReference type="PANTHER" id="PTHR19271:SF16">
    <property type="entry name" value="CYTOCHROME B"/>
    <property type="match status" value="1"/>
</dbReference>
<dbReference type="Pfam" id="PF00032">
    <property type="entry name" value="Cytochrom_B_C"/>
    <property type="match status" value="1"/>
</dbReference>
<dbReference type="Pfam" id="PF00033">
    <property type="entry name" value="Cytochrome_B"/>
    <property type="match status" value="1"/>
</dbReference>
<dbReference type="PIRSF" id="PIRSF038885">
    <property type="entry name" value="COB"/>
    <property type="match status" value="1"/>
</dbReference>
<dbReference type="SUPFAM" id="SSF81648">
    <property type="entry name" value="a domain/subunit of cytochrome bc1 complex (Ubiquinol-cytochrome c reductase)"/>
    <property type="match status" value="1"/>
</dbReference>
<dbReference type="SUPFAM" id="SSF81342">
    <property type="entry name" value="Transmembrane di-heme cytochromes"/>
    <property type="match status" value="1"/>
</dbReference>
<dbReference type="PROSITE" id="PS51003">
    <property type="entry name" value="CYTB_CTER"/>
    <property type="match status" value="1"/>
</dbReference>
<dbReference type="PROSITE" id="PS51002">
    <property type="entry name" value="CYTB_NTER"/>
    <property type="match status" value="1"/>
</dbReference>
<name>CYB_OREAM</name>
<geneLocation type="mitochondrion"/>
<reference key="1">
    <citation type="journal article" date="2000" name="Naturwissenschaften">
        <title>Is the newly described Vietnamese bovid Pseudonovibos spiralis a chamois (genus Rupicapra)?</title>
        <authorList>
            <person name="Hassanin A."/>
            <person name="Douzery E.J.P."/>
        </authorList>
    </citation>
    <scope>NUCLEOTIDE SEQUENCE [GENOMIC DNA]</scope>
</reference>